<accession>O14544</accession>
<accession>Q8WUM3</accession>
<reference key="1">
    <citation type="journal article" date="1997" name="Biochem. Biophys. Res. Commun.">
        <title>Cloning and characterization of novel CIS family genes.</title>
        <authorList>
            <person name="Masuhara M."/>
            <person name="Sakamoto H."/>
            <person name="Matsumoto A."/>
            <person name="Suzuki R."/>
            <person name="Yasukawa H."/>
            <person name="Mitsui K."/>
            <person name="Wakioka T."/>
            <person name="Tanimura S."/>
            <person name="Sasaki A."/>
            <person name="Misawa H."/>
            <person name="Yokouchi M."/>
            <person name="Ohtsubo M."/>
            <person name="Yoshimura A."/>
        </authorList>
    </citation>
    <scope>NUCLEOTIDE SEQUENCE [MRNA]</scope>
</reference>
<reference key="2">
    <citation type="submission" date="2005-07" db="EMBL/GenBank/DDBJ databases">
        <authorList>
            <person name="Mural R.J."/>
            <person name="Istrail S."/>
            <person name="Sutton G.G."/>
            <person name="Florea L."/>
            <person name="Halpern A.L."/>
            <person name="Mobarry C.M."/>
            <person name="Lippert R."/>
            <person name="Walenz B."/>
            <person name="Shatkay H."/>
            <person name="Dew I."/>
            <person name="Miller J.R."/>
            <person name="Flanigan M.J."/>
            <person name="Edwards N.J."/>
            <person name="Bolanos R."/>
            <person name="Fasulo D."/>
            <person name="Halldorsson B.V."/>
            <person name="Hannenhalli S."/>
            <person name="Turner R."/>
            <person name="Yooseph S."/>
            <person name="Lu F."/>
            <person name="Nusskern D.R."/>
            <person name="Shue B.C."/>
            <person name="Zheng X.H."/>
            <person name="Zhong F."/>
            <person name="Delcher A.L."/>
            <person name="Huson D.H."/>
            <person name="Kravitz S.A."/>
            <person name="Mouchard L."/>
            <person name="Reinert K."/>
            <person name="Remington K.A."/>
            <person name="Clark A.G."/>
            <person name="Waterman M.S."/>
            <person name="Eichler E.E."/>
            <person name="Adams M.D."/>
            <person name="Hunkapiller M.W."/>
            <person name="Myers E.W."/>
            <person name="Venter J.C."/>
        </authorList>
    </citation>
    <scope>NUCLEOTIDE SEQUENCE [LARGE SCALE GENOMIC DNA]</scope>
</reference>
<reference key="3">
    <citation type="journal article" date="2004" name="Genome Res.">
        <title>The status, quality, and expansion of the NIH full-length cDNA project: the Mammalian Gene Collection (MGC).</title>
        <authorList>
            <consortium name="The MGC Project Team"/>
        </authorList>
    </citation>
    <scope>NUCLEOTIDE SEQUENCE [LARGE SCALE MRNA]</scope>
    <source>
        <tissue>Skin</tissue>
    </source>
</reference>
<reference key="4">
    <citation type="journal article" date="2004" name="Cell. Mol. Life Sci.">
        <title>Signal transduction via the stem cell factor receptor/c-Kit.</title>
        <authorList>
            <person name="Ronnstrand L."/>
        </authorList>
    </citation>
    <scope>REVIEW ON ROLE IN KIT SIGNALING AND KIT DEGRADATION</scope>
</reference>
<reference key="5">
    <citation type="journal article" date="2011" name="J. Biol. Chem.">
        <title>Structural basis for c-KIT inhibition by the suppressor of cytokine signaling 6 (SOCS6) ubiquitin ligase.</title>
        <authorList>
            <person name="Zadjali F."/>
            <person name="Pike A.C."/>
            <person name="Vesterlund M."/>
            <person name="Sun J."/>
            <person name="Wu C."/>
            <person name="Li S.S."/>
            <person name="Ronnstrand L."/>
            <person name="Knapp S."/>
            <person name="Bullock A.N."/>
            <person name="Flores-Morales A."/>
        </authorList>
    </citation>
    <scope>X-RAY CRYSTALLOGRAPHY (1.45 ANGSTROMS) OF 361-499 IN COMPLEX WITH KIT</scope>
    <scope>FUNCTION AS E3 UBIQUITIN-PROTEIN LIGASE FOR KIT</scope>
</reference>
<name>SOCS6_HUMAN</name>
<gene>
    <name type="primary">SOCS6</name>
    <name type="synonym">CIS4</name>
    <name type="synonym">SOCS4</name>
</gene>
<comment type="function">
    <text evidence="1 5">SOCS family proteins form part of a classical negative feedback system that regulates cytokine signal transduction. May be a substrate recognition component of a SCF-like ECS (Elongin BC-CUL2/5-SOCS-box protein) E3 ubiquitin-protein ligase complex which mediates the ubiquitination and subsequent proteasomal degradation of target proteins (By similarity). Regulates KIT degradation by ubiquitination of the tyrosine-phosphorylated receptor.</text>
</comment>
<comment type="pathway">
    <text>Protein modification; protein ubiquitination.</text>
</comment>
<comment type="subunit">
    <text evidence="1 5">Interacts with RBCK1. Interacts with phosphorylated IRS4 (By similarity). Interacts with PIM3 (By similarity). Interacts with KIT (phosphorylated).</text>
</comment>
<comment type="interaction">
    <interactant intactId="EBI-3929549">
        <id>O14544</id>
    </interactant>
    <interactant intactId="EBI-8643161">
        <id>Q9NX04</id>
        <label>AIRIM</label>
    </interactant>
    <organismsDiffer>false</organismsDiffer>
    <experiments>3</experiments>
</comment>
<comment type="interaction">
    <interactant intactId="EBI-3929549">
        <id>O14544</id>
    </interactant>
    <interactant intactId="EBI-608057">
        <id>P10275</id>
        <label>AR</label>
    </interactant>
    <organismsDiffer>false</organismsDiffer>
    <experiments>4</experiments>
</comment>
<comment type="interaction">
    <interactant intactId="EBI-3929549">
        <id>O14544</id>
    </interactant>
    <interactant intactId="EBI-711158">
        <id>O95376</id>
        <label>ARIH2</label>
    </interactant>
    <organismsDiffer>false</organismsDiffer>
    <experiments>3</experiments>
</comment>
<comment type="interaction">
    <interactant intactId="EBI-3929549">
        <id>O14544</id>
    </interactant>
    <interactant intactId="EBI-25852368">
        <id>O75460-2</id>
        <label>ERN1</label>
    </interactant>
    <organismsDiffer>false</organismsDiffer>
    <experiments>3</experiments>
</comment>
<comment type="interaction">
    <interactant intactId="EBI-3929549">
        <id>O14544</id>
    </interactant>
    <interactant intactId="EBI-348399">
        <id>P22607</id>
        <label>FGFR3</label>
    </interactant>
    <organismsDiffer>false</organismsDiffer>
    <experiments>3</experiments>
</comment>
<comment type="interaction">
    <interactant intactId="EBI-3929549">
        <id>O14544</id>
    </interactant>
    <interactant intactId="EBI-10226858">
        <id>Q0VDC6</id>
        <label>FKBP1A</label>
    </interactant>
    <organismsDiffer>false</organismsDiffer>
    <experiments>3</experiments>
</comment>
<comment type="interaction">
    <interactant intactId="EBI-3929549">
        <id>O14544</id>
    </interactant>
    <interactant intactId="EBI-517684">
        <id>Q13480</id>
        <label>GAB1</label>
    </interactant>
    <organismsDiffer>false</organismsDiffer>
    <experiments>9</experiments>
</comment>
<comment type="interaction">
    <interactant intactId="EBI-3929549">
        <id>O14544</id>
    </interactant>
    <interactant intactId="EBI-351506">
        <id>P06396</id>
        <label>GSN</label>
    </interactant>
    <organismsDiffer>false</organismsDiffer>
    <experiments>3</experiments>
</comment>
<comment type="interaction">
    <interactant intactId="EBI-3929549">
        <id>O14544</id>
    </interactant>
    <interactant intactId="EBI-356991">
        <id>P54652</id>
        <label>HSPA2</label>
    </interactant>
    <organismsDiffer>false</organismsDiffer>
    <experiments>3</experiments>
</comment>
<comment type="interaction">
    <interactant intactId="EBI-3929549">
        <id>O14544</id>
    </interactant>
    <interactant intactId="EBI-1379503">
        <id>P10721</id>
        <label>KIT</label>
    </interactant>
    <organismsDiffer>false</organismsDiffer>
    <experiments>12</experiments>
</comment>
<comment type="interaction">
    <interactant intactId="EBI-3929549">
        <id>O14544</id>
    </interactant>
    <interactant intactId="EBI-1039152">
        <id>P08581</id>
        <label>MET</label>
    </interactant>
    <organismsDiffer>false</organismsDiffer>
    <experiments>4</experiments>
</comment>
<comment type="interaction">
    <interactant intactId="EBI-3929549">
        <id>O14544</id>
    </interactant>
    <interactant intactId="EBI-21251460">
        <id>O60260-5</id>
        <label>PRKN</label>
    </interactant>
    <organismsDiffer>false</organismsDiffer>
    <experiments>3</experiments>
</comment>
<comment type="interaction">
    <interactant intactId="EBI-3929549">
        <id>O14544</id>
    </interactant>
    <interactant intactId="EBI-1053431">
        <id>P49591</id>
        <label>SARS1</label>
    </interactant>
    <organismsDiffer>false</organismsDiffer>
    <experiments>3</experiments>
</comment>
<comment type="interaction">
    <interactant intactId="EBI-3929549">
        <id>O14544</id>
    </interactant>
    <interactant intactId="EBI-372899">
        <id>Q13148</id>
        <label>TARDBP</label>
    </interactant>
    <organismsDiffer>false</organismsDiffer>
    <experiments>3</experiments>
</comment>
<comment type="interaction">
    <interactant intactId="EBI-3929549">
        <id>O14544</id>
    </interactant>
    <interactant intactId="EBI-7877438">
        <id>P42681</id>
        <label>TXK</label>
    </interactant>
    <organismsDiffer>false</organismsDiffer>
    <experiments>3</experiments>
</comment>
<comment type="interaction">
    <interactant intactId="EBI-3929549">
        <id>O14544</id>
    </interactant>
    <interactant intactId="EBI-741480">
        <id>Q9UMX0</id>
        <label>UBQLN1</label>
    </interactant>
    <organismsDiffer>false</organismsDiffer>
    <experiments>3</experiments>
</comment>
<comment type="interaction">
    <interactant intactId="EBI-3929549">
        <id>O14544</id>
    </interactant>
    <interactant intactId="EBI-1044059">
        <id>P46937</id>
        <label>YAP1</label>
    </interactant>
    <organismsDiffer>false</organismsDiffer>
    <experiments>2</experiments>
</comment>
<comment type="domain">
    <text evidence="1">The SOCS box domain mediates the interaction with the Elongin BC complex, an adapter module in different E3 ubiquitin ligase complexes.</text>
</comment>
<evidence type="ECO:0000250" key="1"/>
<evidence type="ECO:0000255" key="2">
    <source>
        <dbReference type="PROSITE-ProRule" id="PRU00191"/>
    </source>
</evidence>
<evidence type="ECO:0000255" key="3">
    <source>
        <dbReference type="PROSITE-ProRule" id="PRU00194"/>
    </source>
</evidence>
<evidence type="ECO:0000256" key="4">
    <source>
        <dbReference type="SAM" id="MobiDB-lite"/>
    </source>
</evidence>
<evidence type="ECO:0000269" key="5">
    <source>
    </source>
</evidence>
<evidence type="ECO:0000305" key="6"/>
<evidence type="ECO:0007829" key="7">
    <source>
        <dbReference type="PDB" id="2VIF"/>
    </source>
</evidence>
<proteinExistence type="evidence at protein level"/>
<sequence length="535" mass="59528">MKKISLKTLRKSFNLNKSKEETDFMVVQQPSLASDFGKDDSLFGSCYGKDMASCDINGEDEKGGKNRSKSESLMGTLKRRLSAKQKSKGKAGTPSGSSADEDTFSSSSAPIVFKDVRAQRPIRSTSLRSHHYSPAPWPLRPTNSEETCIKMEVRVKALVHSSSPSPALNGVRKDFHDLQSETTCQEQANSLKSSASHNGDLHLHLDEHVPVVIGLMPQDYIQYTVPLDEGMYPLEGSRSYCLDSSSPMEVSAVPPQVGGRAFPEDESQVDQDLVVAPEIFVDQSVNGLLIGTTGVMLQSPRAGHDDVPPLSPLLPPMQNNQIQRNFSGLTGTEAHVAESMRCHLNFDPNSAPGVARVYDSVQSSGPMVVTSLTEELKKLAKQGWYWGPITRWEAEGKLANVPDGSFLVRDSSDDRYLLSLSFRSHGKTLHTRIEHSNGRFSFYEQPDVEGHTSIVDLIEHSIRDSENGAFCYSRSRLPGSATYPVRLTNPVSRFMQVRSLQYLCRFVIRQYTRIDLIQKLPLPNKMKDYLQEKHY</sequence>
<protein>
    <recommendedName>
        <fullName>Suppressor of cytokine signaling 6</fullName>
        <shortName>SOCS-6</shortName>
    </recommendedName>
    <alternativeName>
        <fullName>Cytokine-inducible SH2 protein 4</fullName>
        <shortName>CIS-4</shortName>
    </alternativeName>
    <alternativeName>
        <fullName>Suppressor of cytokine signaling 4</fullName>
        <shortName>SOCS-4</shortName>
    </alternativeName>
</protein>
<dbReference type="EMBL" id="AB006968">
    <property type="protein sequence ID" value="BAA22538.1"/>
    <property type="molecule type" value="mRNA"/>
</dbReference>
<dbReference type="EMBL" id="CH471117">
    <property type="protein sequence ID" value="EAW66522.1"/>
    <property type="molecule type" value="Genomic_DNA"/>
</dbReference>
<dbReference type="EMBL" id="BC020082">
    <property type="protein sequence ID" value="AAH20082.1"/>
    <property type="molecule type" value="mRNA"/>
</dbReference>
<dbReference type="CCDS" id="CCDS11998.1"/>
<dbReference type="PIR" id="JC5762">
    <property type="entry name" value="JC5762"/>
</dbReference>
<dbReference type="RefSeq" id="NP_004223.2">
    <property type="nucleotide sequence ID" value="NM_004232.3"/>
</dbReference>
<dbReference type="RefSeq" id="XP_005266840.1">
    <property type="nucleotide sequence ID" value="XM_005266783.5"/>
</dbReference>
<dbReference type="RefSeq" id="XP_016881575.1">
    <property type="nucleotide sequence ID" value="XM_017026086.2"/>
</dbReference>
<dbReference type="RefSeq" id="XP_016881576.1">
    <property type="nucleotide sequence ID" value="XM_017026087.2"/>
</dbReference>
<dbReference type="RefSeq" id="XP_047293893.1">
    <property type="nucleotide sequence ID" value="XM_047437937.1"/>
</dbReference>
<dbReference type="RefSeq" id="XP_047293894.1">
    <property type="nucleotide sequence ID" value="XM_047437938.1"/>
</dbReference>
<dbReference type="RefSeq" id="XP_047293895.1">
    <property type="nucleotide sequence ID" value="XM_047437939.1"/>
</dbReference>
<dbReference type="RefSeq" id="XP_047293896.1">
    <property type="nucleotide sequence ID" value="XM_047437940.1"/>
</dbReference>
<dbReference type="RefSeq" id="XP_047293897.1">
    <property type="nucleotide sequence ID" value="XM_047437941.1"/>
</dbReference>
<dbReference type="RefSeq" id="XP_047293898.1">
    <property type="nucleotide sequence ID" value="XM_047437942.1"/>
</dbReference>
<dbReference type="PDB" id="2VIF">
    <property type="method" value="X-ray"/>
    <property type="resolution" value="1.45 A"/>
    <property type="chains" value="A=361-499"/>
</dbReference>
<dbReference type="PDBsum" id="2VIF"/>
<dbReference type="SMR" id="O14544"/>
<dbReference type="BioGRID" id="114719">
    <property type="interactions" value="123"/>
</dbReference>
<dbReference type="FunCoup" id="O14544">
    <property type="interactions" value="800"/>
</dbReference>
<dbReference type="IntAct" id="O14544">
    <property type="interactions" value="47"/>
</dbReference>
<dbReference type="MINT" id="O14544"/>
<dbReference type="STRING" id="9606.ENSP00000381034"/>
<dbReference type="GlyGen" id="O14544">
    <property type="glycosylation" value="1 site, 1 O-linked glycan (1 site)"/>
</dbReference>
<dbReference type="iPTMnet" id="O14544"/>
<dbReference type="PhosphoSitePlus" id="O14544"/>
<dbReference type="BioMuta" id="SOCS6"/>
<dbReference type="jPOST" id="O14544"/>
<dbReference type="MassIVE" id="O14544"/>
<dbReference type="PaxDb" id="9606-ENSP00000381034"/>
<dbReference type="PeptideAtlas" id="O14544"/>
<dbReference type="ProteomicsDB" id="48079"/>
<dbReference type="Pumba" id="O14544"/>
<dbReference type="Antibodypedia" id="4125">
    <property type="antibodies" value="213 antibodies from 31 providers"/>
</dbReference>
<dbReference type="DNASU" id="9306"/>
<dbReference type="Ensembl" id="ENST00000397942.4">
    <property type="protein sequence ID" value="ENSP00000381034.3"/>
    <property type="gene ID" value="ENSG00000170677.6"/>
</dbReference>
<dbReference type="Ensembl" id="ENST00000582322.1">
    <property type="protein sequence ID" value="ENSP00000463395.1"/>
    <property type="gene ID" value="ENSG00000170677.6"/>
</dbReference>
<dbReference type="GeneID" id="9306"/>
<dbReference type="KEGG" id="hsa:9306"/>
<dbReference type="MANE-Select" id="ENST00000397942.4">
    <property type="protein sequence ID" value="ENSP00000381034.3"/>
    <property type="RefSeq nucleotide sequence ID" value="NM_004232.4"/>
    <property type="RefSeq protein sequence ID" value="NP_004223.2"/>
</dbReference>
<dbReference type="UCSC" id="uc002lkr.2">
    <property type="organism name" value="human"/>
</dbReference>
<dbReference type="AGR" id="HGNC:16833"/>
<dbReference type="CTD" id="9306"/>
<dbReference type="DisGeNET" id="9306"/>
<dbReference type="GeneCards" id="SOCS6"/>
<dbReference type="HGNC" id="HGNC:16833">
    <property type="gene designation" value="SOCS6"/>
</dbReference>
<dbReference type="HPA" id="ENSG00000170677">
    <property type="expression patterns" value="Low tissue specificity"/>
</dbReference>
<dbReference type="MIM" id="605118">
    <property type="type" value="gene"/>
</dbReference>
<dbReference type="neXtProt" id="NX_O14544"/>
<dbReference type="OpenTargets" id="ENSG00000170677"/>
<dbReference type="PharmGKB" id="PA134917653"/>
<dbReference type="VEuPathDB" id="HostDB:ENSG00000170677"/>
<dbReference type="eggNOG" id="KOG4566">
    <property type="taxonomic scope" value="Eukaryota"/>
</dbReference>
<dbReference type="GeneTree" id="ENSGT00940000154847"/>
<dbReference type="HOGENOM" id="CLU_038160_0_0_1"/>
<dbReference type="InParanoid" id="O14544"/>
<dbReference type="OMA" id="PRVNHND"/>
<dbReference type="OrthoDB" id="6270897at2759"/>
<dbReference type="PAN-GO" id="O14544">
    <property type="GO annotations" value="3 GO annotations based on evolutionary models"/>
</dbReference>
<dbReference type="PhylomeDB" id="O14544"/>
<dbReference type="TreeFam" id="TF321368"/>
<dbReference type="PathwayCommons" id="O14544"/>
<dbReference type="Reactome" id="R-HSA-1433559">
    <property type="pathway name" value="Regulation of KIT signaling"/>
</dbReference>
<dbReference type="Reactome" id="R-HSA-8951664">
    <property type="pathway name" value="Neddylation"/>
</dbReference>
<dbReference type="Reactome" id="R-HSA-9706369">
    <property type="pathway name" value="Negative regulation of FLT3"/>
</dbReference>
<dbReference type="SignaLink" id="O14544"/>
<dbReference type="SIGNOR" id="O14544"/>
<dbReference type="UniPathway" id="UPA00143"/>
<dbReference type="BioGRID-ORCS" id="9306">
    <property type="hits" value="9 hits in 1193 CRISPR screens"/>
</dbReference>
<dbReference type="ChiTaRS" id="SOCS6">
    <property type="organism name" value="human"/>
</dbReference>
<dbReference type="EvolutionaryTrace" id="O14544"/>
<dbReference type="GeneWiki" id="SOCS6"/>
<dbReference type="GenomeRNAi" id="9306"/>
<dbReference type="Pharos" id="O14544">
    <property type="development level" value="Tbio"/>
</dbReference>
<dbReference type="PRO" id="PR:O14544"/>
<dbReference type="Proteomes" id="UP000005640">
    <property type="component" value="Chromosome 18"/>
</dbReference>
<dbReference type="RNAct" id="O14544">
    <property type="molecule type" value="protein"/>
</dbReference>
<dbReference type="Bgee" id="ENSG00000170677">
    <property type="expression patterns" value="Expressed in mucosa of paranasal sinus and 198 other cell types or tissues"/>
</dbReference>
<dbReference type="ExpressionAtlas" id="O14544">
    <property type="expression patterns" value="baseline and differential"/>
</dbReference>
<dbReference type="GO" id="GO:0005737">
    <property type="term" value="C:cytoplasm"/>
    <property type="evidence" value="ECO:0000304"/>
    <property type="project" value="ProtInc"/>
</dbReference>
<dbReference type="GO" id="GO:0005829">
    <property type="term" value="C:cytosol"/>
    <property type="evidence" value="ECO:0000304"/>
    <property type="project" value="Reactome"/>
</dbReference>
<dbReference type="GO" id="GO:0001772">
    <property type="term" value="C:immunological synapse"/>
    <property type="evidence" value="ECO:0000314"/>
    <property type="project" value="MGI"/>
</dbReference>
<dbReference type="GO" id="GO:0035591">
    <property type="term" value="F:signaling adaptor activity"/>
    <property type="evidence" value="ECO:0000318"/>
    <property type="project" value="GO_Central"/>
</dbReference>
<dbReference type="GO" id="GO:0007259">
    <property type="term" value="P:cell surface receptor signaling pathway via JAK-STAT"/>
    <property type="evidence" value="ECO:0000304"/>
    <property type="project" value="ProtInc"/>
</dbReference>
<dbReference type="GO" id="GO:0006952">
    <property type="term" value="P:defense response"/>
    <property type="evidence" value="ECO:0000304"/>
    <property type="project" value="ProtInc"/>
</dbReference>
<dbReference type="GO" id="GO:0035556">
    <property type="term" value="P:intracellular signal transduction"/>
    <property type="evidence" value="ECO:0007669"/>
    <property type="project" value="InterPro"/>
</dbReference>
<dbReference type="GO" id="GO:0009968">
    <property type="term" value="P:negative regulation of signal transduction"/>
    <property type="evidence" value="ECO:0007669"/>
    <property type="project" value="UniProtKB-KW"/>
</dbReference>
<dbReference type="GO" id="GO:0050868">
    <property type="term" value="P:negative regulation of T cell activation"/>
    <property type="evidence" value="ECO:0007669"/>
    <property type="project" value="Ensembl"/>
</dbReference>
<dbReference type="GO" id="GO:0010498">
    <property type="term" value="P:proteasomal protein catabolic process"/>
    <property type="evidence" value="ECO:0000315"/>
    <property type="project" value="MGI"/>
</dbReference>
<dbReference type="GO" id="GO:0016567">
    <property type="term" value="P:protein ubiquitination"/>
    <property type="evidence" value="ECO:0007669"/>
    <property type="project" value="UniProtKB-UniPathway"/>
</dbReference>
<dbReference type="GO" id="GO:0040008">
    <property type="term" value="P:regulation of growth"/>
    <property type="evidence" value="ECO:0007669"/>
    <property type="project" value="Ensembl"/>
</dbReference>
<dbReference type="CDD" id="cd10387">
    <property type="entry name" value="SH2_SOCS6"/>
    <property type="match status" value="1"/>
</dbReference>
<dbReference type="CDD" id="cd03740">
    <property type="entry name" value="SOCS_SOCS6"/>
    <property type="match status" value="1"/>
</dbReference>
<dbReference type="FunFam" id="1.10.750.20:FF:000002">
    <property type="entry name" value="Suppressor of cytokine signaling 2"/>
    <property type="match status" value="1"/>
</dbReference>
<dbReference type="FunFam" id="3.30.505.10:FF:000036">
    <property type="entry name" value="Suppressor of cytokine signaling 6"/>
    <property type="match status" value="1"/>
</dbReference>
<dbReference type="Gene3D" id="3.30.505.10">
    <property type="entry name" value="SH2 domain"/>
    <property type="match status" value="1"/>
</dbReference>
<dbReference type="Gene3D" id="1.10.750.20">
    <property type="entry name" value="SOCS box"/>
    <property type="match status" value="1"/>
</dbReference>
<dbReference type="InterPro" id="IPR000980">
    <property type="entry name" value="SH2"/>
</dbReference>
<dbReference type="InterPro" id="IPR036860">
    <property type="entry name" value="SH2_dom_sf"/>
</dbReference>
<dbReference type="InterPro" id="IPR035865">
    <property type="entry name" value="SOCS6_SH2"/>
</dbReference>
<dbReference type="InterPro" id="IPR037345">
    <property type="entry name" value="SOCS6_SOCS"/>
</dbReference>
<dbReference type="InterPro" id="IPR001496">
    <property type="entry name" value="SOCS_box"/>
</dbReference>
<dbReference type="InterPro" id="IPR036036">
    <property type="entry name" value="SOCS_box-like_dom_sf"/>
</dbReference>
<dbReference type="PANTHER" id="PTHR10155">
    <property type="entry name" value="PHOSPHATIDYLINOSITOL 3-KINASE REGULATORY SUBUNIT"/>
    <property type="match status" value="1"/>
</dbReference>
<dbReference type="PANTHER" id="PTHR10155:SF28">
    <property type="entry name" value="SUPPRESSOR OF CYTOKINE SIGNALING 6"/>
    <property type="match status" value="1"/>
</dbReference>
<dbReference type="Pfam" id="PF00017">
    <property type="entry name" value="SH2"/>
    <property type="match status" value="1"/>
</dbReference>
<dbReference type="Pfam" id="PF07525">
    <property type="entry name" value="SOCS_box"/>
    <property type="match status" value="1"/>
</dbReference>
<dbReference type="SMART" id="SM00252">
    <property type="entry name" value="SH2"/>
    <property type="match status" value="1"/>
</dbReference>
<dbReference type="SMART" id="SM00253">
    <property type="entry name" value="SOCS"/>
    <property type="match status" value="1"/>
</dbReference>
<dbReference type="SMART" id="SM00969">
    <property type="entry name" value="SOCS_box"/>
    <property type="match status" value="1"/>
</dbReference>
<dbReference type="SUPFAM" id="SSF55550">
    <property type="entry name" value="SH2 domain"/>
    <property type="match status" value="1"/>
</dbReference>
<dbReference type="SUPFAM" id="SSF158235">
    <property type="entry name" value="SOCS box-like"/>
    <property type="match status" value="1"/>
</dbReference>
<dbReference type="PROSITE" id="PS50001">
    <property type="entry name" value="SH2"/>
    <property type="match status" value="1"/>
</dbReference>
<dbReference type="PROSITE" id="PS50225">
    <property type="entry name" value="SOCS"/>
    <property type="match status" value="1"/>
</dbReference>
<feature type="chain" id="PRO_0000181251" description="Suppressor of cytokine signaling 6">
    <location>
        <begin position="1"/>
        <end position="535"/>
    </location>
</feature>
<feature type="domain" description="SH2" evidence="2">
    <location>
        <begin position="384"/>
        <end position="491"/>
    </location>
</feature>
<feature type="domain" description="SOCS box" evidence="3">
    <location>
        <begin position="486"/>
        <end position="535"/>
    </location>
</feature>
<feature type="region of interest" description="Disordered" evidence="4">
    <location>
        <begin position="80"/>
        <end position="105"/>
    </location>
</feature>
<feature type="compositionally biased region" description="Basic residues" evidence="4">
    <location>
        <begin position="80"/>
        <end position="89"/>
    </location>
</feature>
<feature type="sequence conflict" description="In Ref. 1; BAA22538." evidence="6" ref="1">
    <original>M</original>
    <variation>I</variation>
    <location>
        <position position="74"/>
    </location>
</feature>
<feature type="sequence conflict" description="In Ref. 1; BAA22538." evidence="6" ref="1">
    <original>S</original>
    <variation>T</variation>
    <location>
        <position position="161"/>
    </location>
</feature>
<feature type="helix" evidence="7">
    <location>
        <begin position="372"/>
        <end position="382"/>
    </location>
</feature>
<feature type="helix" evidence="7">
    <location>
        <begin position="391"/>
        <end position="397"/>
    </location>
</feature>
<feature type="turn" evidence="7">
    <location>
        <begin position="398"/>
        <end position="400"/>
    </location>
</feature>
<feature type="strand" evidence="7">
    <location>
        <begin position="406"/>
        <end position="410"/>
    </location>
</feature>
<feature type="strand" evidence="7">
    <location>
        <begin position="417"/>
        <end position="424"/>
    </location>
</feature>
<feature type="strand" evidence="7">
    <location>
        <begin position="427"/>
        <end position="436"/>
    </location>
</feature>
<feature type="strand" evidence="7">
    <location>
        <begin position="439"/>
        <end position="442"/>
    </location>
</feature>
<feature type="strand" evidence="7">
    <location>
        <begin position="451"/>
        <end position="453"/>
    </location>
</feature>
<feature type="helix" evidence="7">
    <location>
        <begin position="454"/>
        <end position="467"/>
    </location>
</feature>
<feature type="strand" evidence="7">
    <location>
        <begin position="471"/>
        <end position="474"/>
    </location>
</feature>
<keyword id="KW-0002">3D-structure</keyword>
<keyword id="KW-0341">Growth regulation</keyword>
<keyword id="KW-1267">Proteomics identification</keyword>
<keyword id="KW-1185">Reference proteome</keyword>
<keyword id="KW-0727">SH2 domain</keyword>
<keyword id="KW-0734">Signal transduction inhibitor</keyword>
<keyword id="KW-0833">Ubl conjugation pathway</keyword>
<organism>
    <name type="scientific">Homo sapiens</name>
    <name type="common">Human</name>
    <dbReference type="NCBI Taxonomy" id="9606"/>
    <lineage>
        <taxon>Eukaryota</taxon>
        <taxon>Metazoa</taxon>
        <taxon>Chordata</taxon>
        <taxon>Craniata</taxon>
        <taxon>Vertebrata</taxon>
        <taxon>Euteleostomi</taxon>
        <taxon>Mammalia</taxon>
        <taxon>Eutheria</taxon>
        <taxon>Euarchontoglires</taxon>
        <taxon>Primates</taxon>
        <taxon>Haplorrhini</taxon>
        <taxon>Catarrhini</taxon>
        <taxon>Hominidae</taxon>
        <taxon>Homo</taxon>
    </lineage>
</organism>